<comment type="function">
    <text evidence="1">Catalyzes the attachment of threonine to tRNA(Thr) in a two-step reaction: L-threonine is first activated by ATP to form Thr-AMP and then transferred to the acceptor end of tRNA(Thr). Also edits incorrectly charged L-seryl-tRNA(Thr).</text>
</comment>
<comment type="catalytic activity">
    <reaction evidence="1">
        <text>tRNA(Thr) + L-threonine + ATP = L-threonyl-tRNA(Thr) + AMP + diphosphate + H(+)</text>
        <dbReference type="Rhea" id="RHEA:24624"/>
        <dbReference type="Rhea" id="RHEA-COMP:9670"/>
        <dbReference type="Rhea" id="RHEA-COMP:9704"/>
        <dbReference type="ChEBI" id="CHEBI:15378"/>
        <dbReference type="ChEBI" id="CHEBI:30616"/>
        <dbReference type="ChEBI" id="CHEBI:33019"/>
        <dbReference type="ChEBI" id="CHEBI:57926"/>
        <dbReference type="ChEBI" id="CHEBI:78442"/>
        <dbReference type="ChEBI" id="CHEBI:78534"/>
        <dbReference type="ChEBI" id="CHEBI:456215"/>
        <dbReference type="EC" id="6.1.1.3"/>
    </reaction>
</comment>
<comment type="cofactor">
    <cofactor evidence="1">
        <name>Zn(2+)</name>
        <dbReference type="ChEBI" id="CHEBI:29105"/>
    </cofactor>
    <text evidence="1">Binds 1 zinc ion per subunit.</text>
</comment>
<comment type="subunit">
    <text evidence="1">Homodimer.</text>
</comment>
<comment type="subcellular location">
    <subcellularLocation>
        <location evidence="1">Cytoplasm</location>
    </subcellularLocation>
</comment>
<comment type="similarity">
    <text evidence="1">Belongs to the class-II aminoacyl-tRNA synthetase family.</text>
</comment>
<proteinExistence type="inferred from homology"/>
<name>SYT_CLOBH</name>
<evidence type="ECO:0000255" key="1">
    <source>
        <dbReference type="HAMAP-Rule" id="MF_00184"/>
    </source>
</evidence>
<evidence type="ECO:0000255" key="2">
    <source>
        <dbReference type="PROSITE-ProRule" id="PRU01228"/>
    </source>
</evidence>
<accession>A5I6L8</accession>
<accession>A7G7V2</accession>
<feature type="chain" id="PRO_1000020370" description="Threonine--tRNA ligase">
    <location>
        <begin position="1"/>
        <end position="635"/>
    </location>
</feature>
<feature type="domain" description="TGS" evidence="2">
    <location>
        <begin position="1"/>
        <end position="61"/>
    </location>
</feature>
<feature type="region of interest" description="Catalytic" evidence="1">
    <location>
        <begin position="242"/>
        <end position="532"/>
    </location>
</feature>
<feature type="binding site" evidence="1">
    <location>
        <position position="333"/>
    </location>
    <ligand>
        <name>Zn(2+)</name>
        <dbReference type="ChEBI" id="CHEBI:29105"/>
    </ligand>
</feature>
<feature type="binding site" evidence="1">
    <location>
        <position position="384"/>
    </location>
    <ligand>
        <name>Zn(2+)</name>
        <dbReference type="ChEBI" id="CHEBI:29105"/>
    </ligand>
</feature>
<feature type="binding site" evidence="1">
    <location>
        <position position="509"/>
    </location>
    <ligand>
        <name>Zn(2+)</name>
        <dbReference type="ChEBI" id="CHEBI:29105"/>
    </ligand>
</feature>
<keyword id="KW-0030">Aminoacyl-tRNA synthetase</keyword>
<keyword id="KW-0067">ATP-binding</keyword>
<keyword id="KW-0963">Cytoplasm</keyword>
<keyword id="KW-0436">Ligase</keyword>
<keyword id="KW-0479">Metal-binding</keyword>
<keyword id="KW-0547">Nucleotide-binding</keyword>
<keyword id="KW-0648">Protein biosynthesis</keyword>
<keyword id="KW-1185">Reference proteome</keyword>
<keyword id="KW-0694">RNA-binding</keyword>
<keyword id="KW-0820">tRNA-binding</keyword>
<keyword id="KW-0862">Zinc</keyword>
<organism>
    <name type="scientific">Clostridium botulinum (strain Hall / ATCC 3502 / NCTC 13319 / Type A)</name>
    <dbReference type="NCBI Taxonomy" id="441771"/>
    <lineage>
        <taxon>Bacteria</taxon>
        <taxon>Bacillati</taxon>
        <taxon>Bacillota</taxon>
        <taxon>Clostridia</taxon>
        <taxon>Eubacteriales</taxon>
        <taxon>Clostridiaceae</taxon>
        <taxon>Clostridium</taxon>
    </lineage>
</organism>
<sequence length="635" mass="73393">MIKITLKDGKVMEFEEGIKISDIAMKISPALYKKALAAKIDGETVDLMTELHKDSSLEILTFEDEMGKWALRHTGSHMLAQAVKRLYPEVKLAIGPAIDTGFYYDFEADFTFTPEMLEKIEAEIKKIIKENHKLERFELPREEAIKLMKEKNEDYKVELIEDLPEGEVISFYKQGDFTDLCAGPHVPSTGKVKSVKLLSLAGAYWRGDENNKMLQRIYGTAFTKKSELDEYLNMIEEAKKRDHRKLGKELDLFSIHEEGPGFPFFHPKGMIVRNILESFWREEHTKAGYQEIRTPLILNEALWHQSGHWDHYKENMYFTNIDDDDYAIKPMNCPGGILVYKNSMHSYRDLPLRLSELGIVHRHELSGALHGLMRVRCFTQDDAHLYMTKEQIKEEVVGIIKLIDKFYKLFGFEYFVELSTRPEDSMGSDEDWEIATNGLREALDSIGKEYRVNEGDGAFYGPKIDFHLKDCIGRTWQCGTIQLDFQMPERFDLSYIGADGEKHRPVMVHRTIYGSVERFIGILIEQYAGAFPTWLAPVQVKLMNITDSQYDYLKKVEEALKENNIRVEIDTRNEKIGYKIREAQLQKVPYMLILGDKEVEAGKVAVRSRKDGDLGAISLEEFIEKIKNEIKNKTN</sequence>
<protein>
    <recommendedName>
        <fullName evidence="1">Threonine--tRNA ligase</fullName>
        <ecNumber evidence="1">6.1.1.3</ecNumber>
    </recommendedName>
    <alternativeName>
        <fullName evidence="1">Threonyl-tRNA synthetase</fullName>
        <shortName evidence="1">ThrRS</shortName>
    </alternativeName>
</protein>
<reference key="1">
    <citation type="journal article" date="2007" name="Genome Res.">
        <title>Genome sequence of a proteolytic (Group I) Clostridium botulinum strain Hall A and comparative analysis of the clostridial genomes.</title>
        <authorList>
            <person name="Sebaihia M."/>
            <person name="Peck M.W."/>
            <person name="Minton N.P."/>
            <person name="Thomson N.R."/>
            <person name="Holden M.T.G."/>
            <person name="Mitchell W.J."/>
            <person name="Carter A.T."/>
            <person name="Bentley S.D."/>
            <person name="Mason D.R."/>
            <person name="Crossman L."/>
            <person name="Paul C.J."/>
            <person name="Ivens A."/>
            <person name="Wells-Bennik M.H.J."/>
            <person name="Davis I.J."/>
            <person name="Cerdeno-Tarraga A.M."/>
            <person name="Churcher C."/>
            <person name="Quail M.A."/>
            <person name="Chillingworth T."/>
            <person name="Feltwell T."/>
            <person name="Fraser A."/>
            <person name="Goodhead I."/>
            <person name="Hance Z."/>
            <person name="Jagels K."/>
            <person name="Larke N."/>
            <person name="Maddison M."/>
            <person name="Moule S."/>
            <person name="Mungall K."/>
            <person name="Norbertczak H."/>
            <person name="Rabbinowitsch E."/>
            <person name="Sanders M."/>
            <person name="Simmonds M."/>
            <person name="White B."/>
            <person name="Whithead S."/>
            <person name="Parkhill J."/>
        </authorList>
    </citation>
    <scope>NUCLEOTIDE SEQUENCE [LARGE SCALE GENOMIC DNA]</scope>
    <source>
        <strain>Hall / ATCC 3502 / NCTC 13319 / Type A</strain>
    </source>
</reference>
<reference key="2">
    <citation type="journal article" date="2007" name="PLoS ONE">
        <title>Analysis of the neurotoxin complex genes in Clostridium botulinum A1-A4 and B1 strains: BoNT/A3, /Ba4 and /B1 clusters are located within plasmids.</title>
        <authorList>
            <person name="Smith T.J."/>
            <person name="Hill K.K."/>
            <person name="Foley B.T."/>
            <person name="Detter J.C."/>
            <person name="Munk A.C."/>
            <person name="Bruce D.C."/>
            <person name="Doggett N.A."/>
            <person name="Smith L.A."/>
            <person name="Marks J.D."/>
            <person name="Xie G."/>
            <person name="Brettin T.S."/>
        </authorList>
    </citation>
    <scope>NUCLEOTIDE SEQUENCE [LARGE SCALE GENOMIC DNA]</scope>
    <source>
        <strain>Hall / ATCC 3502 / NCTC 13319 / Type A</strain>
    </source>
</reference>
<gene>
    <name evidence="1" type="primary">thrS</name>
    <name type="ordered locus">CBO3138</name>
    <name type="ordered locus">CLC_3041</name>
</gene>
<dbReference type="EC" id="6.1.1.3" evidence="1"/>
<dbReference type="EMBL" id="CP000727">
    <property type="protein sequence ID" value="ABS36497.1"/>
    <property type="molecule type" value="Genomic_DNA"/>
</dbReference>
<dbReference type="EMBL" id="AM412317">
    <property type="protein sequence ID" value="CAL84700.1"/>
    <property type="molecule type" value="Genomic_DNA"/>
</dbReference>
<dbReference type="RefSeq" id="WP_012048136.1">
    <property type="nucleotide sequence ID" value="NC_009698.1"/>
</dbReference>
<dbReference type="RefSeq" id="YP_001255628.1">
    <property type="nucleotide sequence ID" value="NC_009495.1"/>
</dbReference>
<dbReference type="RefSeq" id="YP_001388867.1">
    <property type="nucleotide sequence ID" value="NC_009698.1"/>
</dbReference>
<dbReference type="SMR" id="A5I6L8"/>
<dbReference type="GeneID" id="5186859"/>
<dbReference type="KEGG" id="cbh:CLC_3041"/>
<dbReference type="KEGG" id="cbo:CBO3138"/>
<dbReference type="PATRIC" id="fig|413999.7.peg.3117"/>
<dbReference type="HOGENOM" id="CLU_008554_0_1_9"/>
<dbReference type="PRO" id="PR:A5I6L8"/>
<dbReference type="Proteomes" id="UP000001986">
    <property type="component" value="Chromosome"/>
</dbReference>
<dbReference type="GO" id="GO:0005737">
    <property type="term" value="C:cytoplasm"/>
    <property type="evidence" value="ECO:0007669"/>
    <property type="project" value="UniProtKB-SubCell"/>
</dbReference>
<dbReference type="GO" id="GO:0005524">
    <property type="term" value="F:ATP binding"/>
    <property type="evidence" value="ECO:0007669"/>
    <property type="project" value="UniProtKB-UniRule"/>
</dbReference>
<dbReference type="GO" id="GO:0140096">
    <property type="term" value="F:catalytic activity, acting on a protein"/>
    <property type="evidence" value="ECO:0007669"/>
    <property type="project" value="UniProtKB-ARBA"/>
</dbReference>
<dbReference type="GO" id="GO:0046872">
    <property type="term" value="F:metal ion binding"/>
    <property type="evidence" value="ECO:0007669"/>
    <property type="project" value="UniProtKB-KW"/>
</dbReference>
<dbReference type="GO" id="GO:0004829">
    <property type="term" value="F:threonine-tRNA ligase activity"/>
    <property type="evidence" value="ECO:0000318"/>
    <property type="project" value="GO_Central"/>
</dbReference>
<dbReference type="GO" id="GO:0016740">
    <property type="term" value="F:transferase activity"/>
    <property type="evidence" value="ECO:0007669"/>
    <property type="project" value="UniProtKB-ARBA"/>
</dbReference>
<dbReference type="GO" id="GO:0000049">
    <property type="term" value="F:tRNA binding"/>
    <property type="evidence" value="ECO:0007669"/>
    <property type="project" value="UniProtKB-KW"/>
</dbReference>
<dbReference type="GO" id="GO:0006435">
    <property type="term" value="P:threonyl-tRNA aminoacylation"/>
    <property type="evidence" value="ECO:0000318"/>
    <property type="project" value="GO_Central"/>
</dbReference>
<dbReference type="CDD" id="cd01667">
    <property type="entry name" value="TGS_ThrRS"/>
    <property type="match status" value="1"/>
</dbReference>
<dbReference type="CDD" id="cd00860">
    <property type="entry name" value="ThrRS_anticodon"/>
    <property type="match status" value="1"/>
</dbReference>
<dbReference type="CDD" id="cd00771">
    <property type="entry name" value="ThrRS_core"/>
    <property type="match status" value="1"/>
</dbReference>
<dbReference type="FunFam" id="3.10.20.30:FF:000005">
    <property type="entry name" value="Threonine--tRNA ligase"/>
    <property type="match status" value="1"/>
</dbReference>
<dbReference type="FunFam" id="3.30.54.20:FF:000002">
    <property type="entry name" value="Threonine--tRNA ligase"/>
    <property type="match status" value="1"/>
</dbReference>
<dbReference type="FunFam" id="3.30.930.10:FF:000002">
    <property type="entry name" value="Threonine--tRNA ligase"/>
    <property type="match status" value="1"/>
</dbReference>
<dbReference type="FunFam" id="3.40.50.800:FF:000001">
    <property type="entry name" value="Threonine--tRNA ligase"/>
    <property type="match status" value="1"/>
</dbReference>
<dbReference type="FunFam" id="3.30.980.10:FF:000005">
    <property type="entry name" value="Threonyl-tRNA synthetase, mitochondrial"/>
    <property type="match status" value="1"/>
</dbReference>
<dbReference type="Gene3D" id="3.10.20.30">
    <property type="match status" value="1"/>
</dbReference>
<dbReference type="Gene3D" id="3.30.54.20">
    <property type="match status" value="1"/>
</dbReference>
<dbReference type="Gene3D" id="3.40.50.800">
    <property type="entry name" value="Anticodon-binding domain"/>
    <property type="match status" value="1"/>
</dbReference>
<dbReference type="Gene3D" id="3.30.930.10">
    <property type="entry name" value="Bira Bifunctional Protein, Domain 2"/>
    <property type="match status" value="1"/>
</dbReference>
<dbReference type="Gene3D" id="3.30.980.10">
    <property type="entry name" value="Threonyl-trna Synthetase, Chain A, domain 2"/>
    <property type="match status" value="1"/>
</dbReference>
<dbReference type="HAMAP" id="MF_00184">
    <property type="entry name" value="Thr_tRNA_synth"/>
    <property type="match status" value="1"/>
</dbReference>
<dbReference type="InterPro" id="IPR002314">
    <property type="entry name" value="aa-tRNA-synt_IIb"/>
</dbReference>
<dbReference type="InterPro" id="IPR006195">
    <property type="entry name" value="aa-tRNA-synth_II"/>
</dbReference>
<dbReference type="InterPro" id="IPR045864">
    <property type="entry name" value="aa-tRNA-synth_II/BPL/LPL"/>
</dbReference>
<dbReference type="InterPro" id="IPR004154">
    <property type="entry name" value="Anticodon-bd"/>
</dbReference>
<dbReference type="InterPro" id="IPR036621">
    <property type="entry name" value="Anticodon-bd_dom_sf"/>
</dbReference>
<dbReference type="InterPro" id="IPR012675">
    <property type="entry name" value="Beta-grasp_dom_sf"/>
</dbReference>
<dbReference type="InterPro" id="IPR004095">
    <property type="entry name" value="TGS"/>
</dbReference>
<dbReference type="InterPro" id="IPR012676">
    <property type="entry name" value="TGS-like"/>
</dbReference>
<dbReference type="InterPro" id="IPR002320">
    <property type="entry name" value="Thr-tRNA-ligase_IIa"/>
</dbReference>
<dbReference type="InterPro" id="IPR018163">
    <property type="entry name" value="Thr/Ala-tRNA-synth_IIc_edit"/>
</dbReference>
<dbReference type="InterPro" id="IPR047246">
    <property type="entry name" value="ThrRS_anticodon"/>
</dbReference>
<dbReference type="InterPro" id="IPR033728">
    <property type="entry name" value="ThrRS_core"/>
</dbReference>
<dbReference type="InterPro" id="IPR012947">
    <property type="entry name" value="tRNA_SAD"/>
</dbReference>
<dbReference type="NCBIfam" id="TIGR00418">
    <property type="entry name" value="thrS"/>
    <property type="match status" value="1"/>
</dbReference>
<dbReference type="PANTHER" id="PTHR11451:SF44">
    <property type="entry name" value="THREONINE--TRNA LIGASE, CHLOROPLASTIC_MITOCHONDRIAL 2"/>
    <property type="match status" value="1"/>
</dbReference>
<dbReference type="PANTHER" id="PTHR11451">
    <property type="entry name" value="THREONINE-TRNA LIGASE"/>
    <property type="match status" value="1"/>
</dbReference>
<dbReference type="Pfam" id="PF03129">
    <property type="entry name" value="HGTP_anticodon"/>
    <property type="match status" value="1"/>
</dbReference>
<dbReference type="Pfam" id="PF02824">
    <property type="entry name" value="TGS"/>
    <property type="match status" value="1"/>
</dbReference>
<dbReference type="Pfam" id="PF00587">
    <property type="entry name" value="tRNA-synt_2b"/>
    <property type="match status" value="1"/>
</dbReference>
<dbReference type="Pfam" id="PF07973">
    <property type="entry name" value="tRNA_SAD"/>
    <property type="match status" value="1"/>
</dbReference>
<dbReference type="PRINTS" id="PR01047">
    <property type="entry name" value="TRNASYNTHTHR"/>
</dbReference>
<dbReference type="SMART" id="SM00863">
    <property type="entry name" value="tRNA_SAD"/>
    <property type="match status" value="1"/>
</dbReference>
<dbReference type="SUPFAM" id="SSF52954">
    <property type="entry name" value="Class II aaRS ABD-related"/>
    <property type="match status" value="1"/>
</dbReference>
<dbReference type="SUPFAM" id="SSF55681">
    <property type="entry name" value="Class II aaRS and biotin synthetases"/>
    <property type="match status" value="1"/>
</dbReference>
<dbReference type="SUPFAM" id="SSF81271">
    <property type="entry name" value="TGS-like"/>
    <property type="match status" value="1"/>
</dbReference>
<dbReference type="SUPFAM" id="SSF55186">
    <property type="entry name" value="ThrRS/AlaRS common domain"/>
    <property type="match status" value="1"/>
</dbReference>
<dbReference type="PROSITE" id="PS50862">
    <property type="entry name" value="AA_TRNA_LIGASE_II"/>
    <property type="match status" value="1"/>
</dbReference>
<dbReference type="PROSITE" id="PS51880">
    <property type="entry name" value="TGS"/>
    <property type="match status" value="1"/>
</dbReference>